<name>TNNT3_MOUSE</name>
<reference key="1">
    <citation type="journal article" date="1997" name="Gene">
        <title>Primary structure and developmental acidic to basic transition of 13 alternatively spliced mouse fast skeletal muscle troponin T isoforms.</title>
        <authorList>
            <person name="Wang J."/>
            <person name="Jin J.-P."/>
        </authorList>
    </citation>
    <scope>NUCLEOTIDE SEQUENCE [MRNA]</scope>
    <scope>ALTERNATIVE SPLICING</scope>
    <scope>TISSUE SPECIFICITY</scope>
    <scope>DEVELOPMENTAL STAGE</scope>
    <source>
        <strain>129/SvJ</strain>
        <tissue>Skeletal muscle</tissue>
    </source>
</reference>
<reference key="2">
    <citation type="journal article" date="1997" name="Mamm. Genome">
        <title>cDNA cloning and chromosomal mapping of mouse fast skeletal muscle troponin T.</title>
        <authorList>
            <person name="Koch A."/>
            <person name="Juan T.S.-C."/>
            <person name="Jenkins N.A."/>
            <person name="Gilbert D.J."/>
            <person name="Copeland N.G."/>
            <person name="McNiece I.K."/>
            <person name="Fletcher F.A."/>
        </authorList>
    </citation>
    <scope>NUCLEOTIDE SEQUENCE [MRNA] (ISOFORM B3E17)</scope>
</reference>
<reference key="3">
    <citation type="journal article" date="2009" name="PLoS Biol.">
        <title>Lineage-specific biology revealed by a finished genome assembly of the mouse.</title>
        <authorList>
            <person name="Church D.M."/>
            <person name="Goodstadt L."/>
            <person name="Hillier L.W."/>
            <person name="Zody M.C."/>
            <person name="Goldstein S."/>
            <person name="She X."/>
            <person name="Bult C.J."/>
            <person name="Agarwala R."/>
            <person name="Cherry J.L."/>
            <person name="DiCuccio M."/>
            <person name="Hlavina W."/>
            <person name="Kapustin Y."/>
            <person name="Meric P."/>
            <person name="Maglott D."/>
            <person name="Birtle Z."/>
            <person name="Marques A.C."/>
            <person name="Graves T."/>
            <person name="Zhou S."/>
            <person name="Teague B."/>
            <person name="Potamousis K."/>
            <person name="Churas C."/>
            <person name="Place M."/>
            <person name="Herschleb J."/>
            <person name="Runnheim R."/>
            <person name="Forrest D."/>
            <person name="Amos-Landgraf J."/>
            <person name="Schwartz D.C."/>
            <person name="Cheng Z."/>
            <person name="Lindblad-Toh K."/>
            <person name="Eichler E.E."/>
            <person name="Ponting C.P."/>
        </authorList>
    </citation>
    <scope>NUCLEOTIDE SEQUENCE [LARGE SCALE GENOMIC DNA]</scope>
    <scope>VARIANT ARG-131</scope>
    <source>
        <strain>C57BL/6J</strain>
    </source>
</reference>
<reference key="4">
    <citation type="journal article" date="2004" name="Genome Res.">
        <title>The status, quality, and expansion of the NIH full-length cDNA project: the Mammalian Gene Collection (MGC).</title>
        <authorList>
            <consortium name="The MGC Project Team"/>
        </authorList>
    </citation>
    <scope>NUCLEOTIDE SEQUENCE [LARGE SCALE MRNA] (ISOFORM 14)</scope>
</reference>
<reference key="5">
    <citation type="journal article" date="2010" name="Cell">
        <title>A tissue-specific atlas of mouse protein phosphorylation and expression.</title>
        <authorList>
            <person name="Huttlin E.L."/>
            <person name="Jedrychowski M.P."/>
            <person name="Elias J.E."/>
            <person name="Goswami T."/>
            <person name="Rad R."/>
            <person name="Beausoleil S.A."/>
            <person name="Villen J."/>
            <person name="Haas W."/>
            <person name="Sowa M.E."/>
            <person name="Gygi S.P."/>
        </authorList>
    </citation>
    <scope>PHOSPHORYLATION [LARGE SCALE ANALYSIS] AT SER-162</scope>
    <scope>IDENTIFICATION BY MASS SPECTROMETRY [LARGE SCALE ANALYSIS]</scope>
    <source>
        <tissue>Brown adipose tissue</tissue>
    </source>
</reference>
<protein>
    <recommendedName>
        <fullName>Troponin T, fast skeletal muscle</fullName>
        <shortName>TnTf</shortName>
    </recommendedName>
    <alternativeName>
        <fullName>Fast skeletal muscle troponin T</fullName>
        <shortName>fTnT</shortName>
    </alternativeName>
</protein>
<proteinExistence type="evidence at protein level"/>
<feature type="initiator methionine" description="Removed" evidence="2">
    <location>
        <position position="1"/>
    </location>
</feature>
<feature type="chain" id="PRO_0000186179" description="Troponin T, fast skeletal muscle">
    <location>
        <begin position="2"/>
        <end position="272"/>
    </location>
</feature>
<feature type="region of interest" description="Disordered" evidence="4">
    <location>
        <begin position="1"/>
        <end position="75"/>
    </location>
</feature>
<feature type="region of interest" description="Disordered" evidence="4">
    <location>
        <begin position="114"/>
        <end position="193"/>
    </location>
</feature>
<feature type="region of interest" description="Disordered" evidence="4">
    <location>
        <begin position="248"/>
        <end position="272"/>
    </location>
</feature>
<feature type="compositionally biased region" description="Acidic residues" evidence="4">
    <location>
        <begin position="1"/>
        <end position="50"/>
    </location>
</feature>
<feature type="compositionally biased region" description="Basic and acidic residues" evidence="4">
    <location>
        <begin position="63"/>
        <end position="75"/>
    </location>
</feature>
<feature type="compositionally biased region" description="Basic and acidic residues" evidence="4">
    <location>
        <begin position="114"/>
        <end position="156"/>
    </location>
</feature>
<feature type="compositionally biased region" description="Basic and acidic residues" evidence="4">
    <location>
        <begin position="184"/>
        <end position="193"/>
    </location>
</feature>
<feature type="modified residue" description="N-acetylserine" evidence="2">
    <location>
        <position position="2"/>
    </location>
</feature>
<feature type="modified residue" description="Phosphoserine" evidence="3">
    <location>
        <position position="2"/>
    </location>
</feature>
<feature type="modified residue" description="Phosphoserine" evidence="3">
    <location>
        <position position="91"/>
    </location>
</feature>
<feature type="modified residue" description="Phosphoserine" evidence="10">
    <location>
        <position position="162"/>
    </location>
</feature>
<feature type="modified residue" description="Phosphoserine" evidence="3">
    <location>
        <position position="169"/>
    </location>
</feature>
<feature type="modified residue" description="Phosphoserine" evidence="3">
    <location>
        <position position="170"/>
    </location>
</feature>
<feature type="modified residue" description="Phosphoserine" evidence="3">
    <location>
        <position position="206"/>
    </location>
</feature>
<feature type="modified residue" description="Phosphotyrosine" evidence="3">
    <location>
        <position position="222"/>
    </location>
</feature>
<feature type="splice variant" id="VSP_050338" description="In isoform A4e17, isoform B3e17, isoform B3e16, isoform B4e17 and isoform B4e16." evidence="8">
    <location>
        <begin position="11"/>
        <end position="16"/>
    </location>
</feature>
<feature type="splice variant" id="VSP_050340" description="In isoform B4e17 and isoform B4e16." evidence="9">
    <location>
        <begin position="23"/>
        <end position="49"/>
    </location>
</feature>
<feature type="splice variant" id="VSP_050339" description="In isoform A3e17, isoform B2e17 and isoform B2e16." evidence="9">
    <location>
        <begin position="23"/>
        <end position="31"/>
    </location>
</feature>
<feature type="splice variant" id="VSP_050341" description="In isoform A2e17, isoform A4e17 and isoform A6e17." evidence="9">
    <location>
        <begin position="28"/>
        <end position="31"/>
    </location>
</feature>
<feature type="splice variant" id="VSP_050342" description="In isoform B1e16, isoform B3e17 and isoform B3e16." evidence="8">
    <location>
        <begin position="32"/>
        <end position="49"/>
    </location>
</feature>
<feature type="splice variant" id="VSP_050343" description="In isoform A5e17, isoform A6e17, isoform B2e17 and isoform B2e16." evidence="9">
    <location>
        <begin position="37"/>
        <end position="49"/>
    </location>
</feature>
<feature type="splice variant" id="VSP_050344" description="In isoform B1e16, isoform B2e16, isoform B3e16, isoform B4e16 and isoform 14." evidence="7">
    <original>TTLRSRIDQAQKH</original>
    <variation>MTVRARVEMLAKF</variation>
    <location>
        <begin position="243"/>
        <end position="255"/>
    </location>
</feature>
<feature type="sequence variant" evidence="5">
    <original>P</original>
    <variation>R</variation>
    <location>
        <position position="131"/>
    </location>
</feature>
<feature type="sequence conflict" description="In Ref. 2; AAB39743." evidence="9" ref="2">
    <original>A</original>
    <variation>T</variation>
    <location>
        <position position="252"/>
    </location>
</feature>
<dbReference type="EMBL" id="L49466">
    <property type="protein sequence ID" value="AAB67290.1"/>
    <property type="molecule type" value="mRNA"/>
</dbReference>
<dbReference type="EMBL" id="L49467">
    <property type="protein sequence ID" value="AAF01502.1"/>
    <property type="molecule type" value="mRNA"/>
</dbReference>
<dbReference type="EMBL" id="L49468">
    <property type="protein sequence ID" value="AAF01503.1"/>
    <property type="molecule type" value="mRNA"/>
</dbReference>
<dbReference type="EMBL" id="L49470">
    <property type="protein sequence ID" value="AAB67291.1"/>
    <property type="molecule type" value="mRNA"/>
</dbReference>
<dbReference type="EMBL" id="L49471">
    <property type="protein sequence ID" value="AAB67292.1"/>
    <property type="molecule type" value="mRNA"/>
</dbReference>
<dbReference type="EMBL" id="L49472">
    <property type="protein sequence ID" value="AAB67293.1"/>
    <property type="molecule type" value="mRNA"/>
</dbReference>
<dbReference type="EMBL" id="L48988">
    <property type="protein sequence ID" value="AAB67283.1"/>
    <property type="molecule type" value="mRNA"/>
</dbReference>
<dbReference type="EMBL" id="L48989">
    <property type="protein sequence ID" value="AAB67284.1"/>
    <property type="molecule type" value="mRNA"/>
</dbReference>
<dbReference type="EMBL" id="L48990">
    <property type="protein sequence ID" value="AAB67285.1"/>
    <property type="molecule type" value="mRNA"/>
</dbReference>
<dbReference type="EMBL" id="L48991">
    <property type="protein sequence ID" value="AAB67286.1"/>
    <property type="molecule type" value="mRNA"/>
</dbReference>
<dbReference type="EMBL" id="L48992">
    <property type="protein sequence ID" value="AAB67287.1"/>
    <property type="molecule type" value="mRNA"/>
</dbReference>
<dbReference type="EMBL" id="L48993">
    <property type="protein sequence ID" value="AAB67288.1"/>
    <property type="molecule type" value="mRNA"/>
</dbReference>
<dbReference type="EMBL" id="L49018">
    <property type="protein sequence ID" value="AAB67289.1"/>
    <property type="molecule type" value="mRNA"/>
</dbReference>
<dbReference type="EMBL" id="U77779">
    <property type="protein sequence ID" value="AAB39743.1"/>
    <property type="molecule type" value="mRNA"/>
</dbReference>
<dbReference type="EMBL" id="AL603651">
    <property type="status" value="NOT_ANNOTATED_CDS"/>
    <property type="molecule type" value="Genomic_DNA"/>
</dbReference>
<dbReference type="EMBL" id="BC003747">
    <property type="protein sequence ID" value="AAH03747.1"/>
    <property type="molecule type" value="mRNA"/>
</dbReference>
<dbReference type="CCDS" id="CCDS22031.1">
    <molecule id="Q9QZ47-10"/>
</dbReference>
<dbReference type="CCDS" id="CCDS52451.1">
    <molecule id="Q9QZ47-14"/>
</dbReference>
<dbReference type="CCDS" id="CCDS52452.1">
    <molecule id="Q9QZ47-1"/>
</dbReference>
<dbReference type="CCDS" id="CCDS52453.1">
    <molecule id="Q9QZ47-5"/>
</dbReference>
<dbReference type="CCDS" id="CCDS52454.1">
    <molecule id="Q9QZ47-2"/>
</dbReference>
<dbReference type="CCDS" id="CCDS52455.1">
    <molecule id="Q9QZ47-6"/>
</dbReference>
<dbReference type="CCDS" id="CCDS52456.1">
    <molecule id="Q9QZ47-3"/>
</dbReference>
<dbReference type="CCDS" id="CCDS85471.1">
    <molecule id="Q9QZ47-7"/>
</dbReference>
<dbReference type="CCDS" id="CCDS85472.1">
    <molecule id="Q9QZ47-9"/>
</dbReference>
<dbReference type="CCDS" id="CCDS85473.1">
    <molecule id="Q9QZ47-8"/>
</dbReference>
<dbReference type="CCDS" id="CCDS85474.1">
    <molecule id="Q9QZ47-11"/>
</dbReference>
<dbReference type="CCDS" id="CCDS85475.1">
    <molecule id="Q9QZ47-4"/>
</dbReference>
<dbReference type="CCDS" id="CCDS85476.1">
    <molecule id="Q9QZ47-13"/>
</dbReference>
<dbReference type="CCDS" id="CCDS85477.1">
    <molecule id="Q9QZ47-12"/>
</dbReference>
<dbReference type="RefSeq" id="NP_001157137.1">
    <property type="nucleotide sequence ID" value="NM_001163665.1"/>
</dbReference>
<dbReference type="RefSeq" id="NP_001157140.1">
    <property type="nucleotide sequence ID" value="NM_001163668.1"/>
</dbReference>
<dbReference type="RefSeq" id="NP_001334476.1">
    <property type="nucleotide sequence ID" value="NM_001347547.1"/>
</dbReference>
<dbReference type="RefSeq" id="NP_001334477.1">
    <property type="nucleotide sequence ID" value="NM_001347548.1"/>
</dbReference>
<dbReference type="RefSeq" id="NP_001334478.1">
    <property type="nucleotide sequence ID" value="NM_001347549.1"/>
</dbReference>
<dbReference type="RefSeq" id="NP_001334479.1">
    <property type="nucleotide sequence ID" value="NM_001347550.1"/>
</dbReference>
<dbReference type="RefSeq" id="NP_001334480.1">
    <property type="nucleotide sequence ID" value="NM_001347551.1"/>
</dbReference>
<dbReference type="RefSeq" id="NP_001334481.1">
    <property type="nucleotide sequence ID" value="NM_001347552.1"/>
</dbReference>
<dbReference type="RefSeq" id="NP_035750.2">
    <property type="nucleotide sequence ID" value="NM_011620.3"/>
</dbReference>
<dbReference type="SMR" id="Q9QZ47"/>
<dbReference type="BioGRID" id="204269">
    <property type="interactions" value="1"/>
</dbReference>
<dbReference type="FunCoup" id="Q9QZ47">
    <property type="interactions" value="20"/>
</dbReference>
<dbReference type="IntAct" id="Q9QZ47">
    <property type="interactions" value="1"/>
</dbReference>
<dbReference type="MINT" id="Q9QZ47"/>
<dbReference type="STRING" id="10090.ENSMUSP00000136278"/>
<dbReference type="iPTMnet" id="Q9QZ47"/>
<dbReference type="PhosphoSitePlus" id="Q9QZ47"/>
<dbReference type="jPOST" id="Q9QZ47"/>
<dbReference type="PaxDb" id="10090-ENSMUSP00000136278"/>
<dbReference type="ProteomicsDB" id="258796">
    <molecule id="Q9QZ47-1"/>
</dbReference>
<dbReference type="ProteomicsDB" id="258797">
    <molecule id="Q9QZ47-2"/>
</dbReference>
<dbReference type="ProteomicsDB" id="258798">
    <molecule id="Q9QZ47-3"/>
</dbReference>
<dbReference type="ProteomicsDB" id="258799">
    <molecule id="Q9QZ47-4"/>
</dbReference>
<dbReference type="ProteomicsDB" id="258800">
    <molecule id="Q9QZ47-5"/>
</dbReference>
<dbReference type="ProteomicsDB" id="258801">
    <molecule id="Q9QZ47-6"/>
</dbReference>
<dbReference type="ProteomicsDB" id="258802">
    <molecule id="Q9QZ47-7"/>
</dbReference>
<dbReference type="ProteomicsDB" id="258803">
    <molecule id="Q9QZ47-8"/>
</dbReference>
<dbReference type="ProteomicsDB" id="258804">
    <molecule id="Q9QZ47-9"/>
</dbReference>
<dbReference type="ProteomicsDB" id="258805">
    <molecule id="Q9QZ47-10"/>
</dbReference>
<dbReference type="ProteomicsDB" id="258806">
    <molecule id="Q9QZ47-11"/>
</dbReference>
<dbReference type="ProteomicsDB" id="258807">
    <molecule id="Q9QZ47-12"/>
</dbReference>
<dbReference type="ProteomicsDB" id="258808">
    <molecule id="Q9QZ47-13"/>
</dbReference>
<dbReference type="ProteomicsDB" id="258809">
    <molecule id="Q9QZ47-14"/>
</dbReference>
<dbReference type="DNASU" id="21957"/>
<dbReference type="GeneID" id="21957"/>
<dbReference type="KEGG" id="mmu:21957"/>
<dbReference type="UCSC" id="uc009knj.2">
    <molecule id="Q9QZ47-10"/>
    <property type="organism name" value="mouse"/>
</dbReference>
<dbReference type="UCSC" id="uc009knp.2">
    <molecule id="Q9QZ47-14"/>
    <property type="organism name" value="mouse"/>
</dbReference>
<dbReference type="AGR" id="MGI:109550"/>
<dbReference type="CTD" id="7140"/>
<dbReference type="MGI" id="MGI:109550">
    <property type="gene designation" value="Tnnt3"/>
</dbReference>
<dbReference type="eggNOG" id="KOG3634">
    <property type="taxonomic scope" value="Eukaryota"/>
</dbReference>
<dbReference type="InParanoid" id="Q9QZ47"/>
<dbReference type="OrthoDB" id="330499at2759"/>
<dbReference type="PhylomeDB" id="Q9QZ47"/>
<dbReference type="TreeFam" id="TF313321"/>
<dbReference type="Reactome" id="R-MMU-390522">
    <property type="pathway name" value="Striated Muscle Contraction"/>
</dbReference>
<dbReference type="BioGRID-ORCS" id="21957">
    <property type="hits" value="1 hit in 76 CRISPR screens"/>
</dbReference>
<dbReference type="PRO" id="PR:Q9QZ47"/>
<dbReference type="Proteomes" id="UP000000589">
    <property type="component" value="Unplaced"/>
</dbReference>
<dbReference type="RNAct" id="Q9QZ47">
    <property type="molecule type" value="protein"/>
</dbReference>
<dbReference type="GO" id="GO:0005861">
    <property type="term" value="C:troponin complex"/>
    <property type="evidence" value="ECO:0007669"/>
    <property type="project" value="InterPro"/>
</dbReference>
<dbReference type="GO" id="GO:0006937">
    <property type="term" value="P:regulation of muscle contraction"/>
    <property type="evidence" value="ECO:0007669"/>
    <property type="project" value="InterPro"/>
</dbReference>
<dbReference type="FunFam" id="1.20.5.350:FF:000001">
    <property type="entry name" value="Troponin T, fast skeletal muscle"/>
    <property type="match status" value="1"/>
</dbReference>
<dbReference type="Gene3D" id="1.20.5.350">
    <property type="match status" value="1"/>
</dbReference>
<dbReference type="InterPro" id="IPR027707">
    <property type="entry name" value="TNNT"/>
</dbReference>
<dbReference type="InterPro" id="IPR001978">
    <property type="entry name" value="Troponin"/>
</dbReference>
<dbReference type="InterPro" id="IPR038077">
    <property type="entry name" value="Troponin_sf"/>
</dbReference>
<dbReference type="PANTHER" id="PTHR11521">
    <property type="entry name" value="TROPONIN T"/>
    <property type="match status" value="1"/>
</dbReference>
<dbReference type="PANTHER" id="PTHR11521:SF4">
    <property type="entry name" value="TROPONIN T, FAST SKELETAL MUSCLE"/>
    <property type="match status" value="1"/>
</dbReference>
<dbReference type="Pfam" id="PF00992">
    <property type="entry name" value="Troponin"/>
    <property type="match status" value="1"/>
</dbReference>
<dbReference type="SUPFAM" id="SSF90250">
    <property type="entry name" value="Troponin coil-coiled subunits"/>
    <property type="match status" value="1"/>
</dbReference>
<evidence type="ECO:0000250" key="1"/>
<evidence type="ECO:0000250" key="2">
    <source>
        <dbReference type="UniProtKB" id="P02641"/>
    </source>
</evidence>
<evidence type="ECO:0000250" key="3">
    <source>
        <dbReference type="UniProtKB" id="P09739"/>
    </source>
</evidence>
<evidence type="ECO:0000256" key="4">
    <source>
        <dbReference type="SAM" id="MobiDB-lite"/>
    </source>
</evidence>
<evidence type="ECO:0000269" key="5">
    <source>
    </source>
</evidence>
<evidence type="ECO:0000269" key="6">
    <source>
    </source>
</evidence>
<evidence type="ECO:0000303" key="7">
    <source>
    </source>
</evidence>
<evidence type="ECO:0000303" key="8">
    <source>
    </source>
</evidence>
<evidence type="ECO:0000305" key="9"/>
<evidence type="ECO:0007744" key="10">
    <source>
    </source>
</evidence>
<organism>
    <name type="scientific">Mus musculus</name>
    <name type="common">Mouse</name>
    <dbReference type="NCBI Taxonomy" id="10090"/>
    <lineage>
        <taxon>Eukaryota</taxon>
        <taxon>Metazoa</taxon>
        <taxon>Chordata</taxon>
        <taxon>Craniata</taxon>
        <taxon>Vertebrata</taxon>
        <taxon>Euteleostomi</taxon>
        <taxon>Mammalia</taxon>
        <taxon>Eutheria</taxon>
        <taxon>Euarchontoglires</taxon>
        <taxon>Glires</taxon>
        <taxon>Rodentia</taxon>
        <taxon>Myomorpha</taxon>
        <taxon>Muroidea</taxon>
        <taxon>Muridae</taxon>
        <taxon>Murinae</taxon>
        <taxon>Mus</taxon>
        <taxon>Mus</taxon>
    </lineage>
</organism>
<gene>
    <name type="primary">Tnnt3</name>
</gene>
<accession>Q9QZ47</accession>
<accession>A2A6H7</accession>
<accession>A2A6H8</accession>
<accession>A2A6H9</accession>
<accession>A2A6I1</accession>
<accession>A2A6I2</accession>
<accession>A2A6I4</accession>
<accession>A2A6I6</accession>
<accession>A2A6I7</accession>
<accession>A2A6I9</accession>
<accession>O35575</accession>
<accession>O35576</accession>
<accession>O35577</accession>
<accession>O35578</accession>
<accession>O35579</accession>
<accession>O35580</accession>
<accession>O35581</accession>
<accession>O35582</accession>
<accession>O35583</accession>
<accession>O35584</accession>
<accession>O35585</accession>
<accession>P97456</accession>
<accession>Q99L89</accession>
<accession>Q9QZ46</accession>
<keyword id="KW-0007">Acetylation</keyword>
<keyword id="KW-0025">Alternative splicing</keyword>
<keyword id="KW-0514">Muscle protein</keyword>
<keyword id="KW-0597">Phosphoprotein</keyword>
<keyword id="KW-1185">Reference proteome</keyword>
<sequence length="272" mass="32241">MSDEETEQVEEQYEEEEEAQEEEVQEEAPEPEEVQEDAVAEEEREEDEEEEKPRPKLTAPKIPEGEKVDFDDIQKKRQNKDLMELQALIDSHFEARKKEEEELIALKERIEKRRAERAEQQRIRAEKEREPQNRLAEEKARREEEDAKRRAEDDMKKKKALSSMGANYSSYLAKADQKRGKKQTAREMKKKILAERRKPLNIDHLSDDKLRDKAKELWDTLYQLETDKFEFGEKLKRQKYDITTLRSRIDQAQKHSKKAGATAKGKVGGRWK</sequence>
<comment type="function">
    <text evidence="1">Troponin T is the tropomyosin-binding subunit of troponin, the thin filament regulatory complex which confers calcium-sensitivity to striated muscle actomyosin ATPase activity.</text>
</comment>
<comment type="alternative products">
    <event type="alternative splicing"/>
    <isoform>
        <id>Q9QZ47-1</id>
        <name>A1e17</name>
        <sequence type="displayed"/>
    </isoform>
    <isoform>
        <id>Q9QZ47-2</id>
        <name>A2e17</name>
        <sequence type="described" ref="VSP_050341"/>
    </isoform>
    <isoform>
        <id>Q9QZ47-3</id>
        <name>A3e17</name>
        <sequence type="described" ref="VSP_050339"/>
    </isoform>
    <isoform>
        <id>Q9QZ47-4</id>
        <name>A4e17</name>
        <sequence type="described" ref="VSP_050338 VSP_050341"/>
    </isoform>
    <isoform>
        <id>Q9QZ47-5</id>
        <name>A5e17</name>
        <sequence type="described" ref="VSP_050343"/>
    </isoform>
    <isoform>
        <id>Q9QZ47-6</id>
        <name>A6e17</name>
        <sequence type="described" ref="VSP_050341 VSP_050343"/>
    </isoform>
    <isoform>
        <id>Q9QZ47-7</id>
        <name>B1e16</name>
        <sequence type="described" ref="VSP_050342 VSP_050344"/>
    </isoform>
    <isoform>
        <id>Q9QZ47-8</id>
        <name>B2e17</name>
        <sequence type="described" ref="VSP_050339 VSP_050343"/>
    </isoform>
    <isoform>
        <id>Q9QZ47-9</id>
        <name>B2e16</name>
        <sequence type="described" ref="VSP_050339 VSP_050343 VSP_050344"/>
    </isoform>
    <isoform>
        <id>Q9QZ47-10</id>
        <name>B3e17</name>
        <name>PTROPT</name>
        <sequence type="described" ref="VSP_050338 VSP_050342"/>
    </isoform>
    <isoform>
        <id>Q9QZ47-11</id>
        <name>B3e16</name>
        <sequence type="described" ref="VSP_050338 VSP_050342 VSP_050344"/>
    </isoform>
    <isoform>
        <id>Q9QZ47-12</id>
        <name>B4e17</name>
        <sequence type="described" ref="VSP_050338 VSP_050340"/>
    </isoform>
    <isoform>
        <id>Q9QZ47-13</id>
        <name>B4e16</name>
        <sequence type="described" ref="VSP_050338 VSP_050340 VSP_050344"/>
    </isoform>
    <isoform>
        <id>Q9QZ47-14</id>
        <name>14</name>
        <sequence type="described" ref="VSP_050344"/>
    </isoform>
    <text>Additional isoforms seem to exist. Isoforms A1e17, A2e17, A3e17, A4e17, A5e17 and A6e17 are acidic while isoforms B1e16, B2e17, B2e16, B3e17, B3e16, B4e17 and B4e16 are basic.</text>
</comment>
<comment type="tissue specificity">
    <text evidence="6">Expressed predominantly in skeletal muscle.</text>
</comment>
<comment type="developmental stage">
    <text evidence="6">Embryo and neonate express predominantly acidic isoforms while all adult isoforms are basic. Only one isoform, B2e17, is found in both embryo/neonate and adult. A transition from high to low molecular weight isoforms is also seen during postnatal development.</text>
</comment>
<comment type="similarity">
    <text evidence="9">Belongs to the troponin T family.</text>
</comment>